<accession>B8GMK2</accession>
<evidence type="ECO:0000255" key="1">
    <source>
        <dbReference type="HAMAP-Rule" id="MF_00111"/>
    </source>
</evidence>
<name>MURA_THISH</name>
<feature type="chain" id="PRO_1000119125" description="UDP-N-acetylglucosamine 1-carboxyvinyltransferase">
    <location>
        <begin position="1"/>
        <end position="419"/>
    </location>
</feature>
<feature type="active site" description="Proton donor" evidence="1">
    <location>
        <position position="117"/>
    </location>
</feature>
<feature type="binding site" evidence="1">
    <location>
        <begin position="22"/>
        <end position="23"/>
    </location>
    <ligand>
        <name>phosphoenolpyruvate</name>
        <dbReference type="ChEBI" id="CHEBI:58702"/>
    </ligand>
</feature>
<feature type="binding site" evidence="1">
    <location>
        <position position="93"/>
    </location>
    <ligand>
        <name>UDP-N-acetyl-alpha-D-glucosamine</name>
        <dbReference type="ChEBI" id="CHEBI:57705"/>
    </ligand>
</feature>
<feature type="binding site" evidence="1">
    <location>
        <position position="306"/>
    </location>
    <ligand>
        <name>UDP-N-acetyl-alpha-D-glucosamine</name>
        <dbReference type="ChEBI" id="CHEBI:57705"/>
    </ligand>
</feature>
<feature type="binding site" evidence="1">
    <location>
        <position position="328"/>
    </location>
    <ligand>
        <name>UDP-N-acetyl-alpha-D-glucosamine</name>
        <dbReference type="ChEBI" id="CHEBI:57705"/>
    </ligand>
</feature>
<feature type="modified residue" description="2-(S-cysteinyl)pyruvic acid O-phosphothioketal" evidence="1">
    <location>
        <position position="117"/>
    </location>
</feature>
<proteinExistence type="inferred from homology"/>
<dbReference type="EC" id="2.5.1.7" evidence="1"/>
<dbReference type="EMBL" id="CP001339">
    <property type="protein sequence ID" value="ACL71834.1"/>
    <property type="molecule type" value="Genomic_DNA"/>
</dbReference>
<dbReference type="RefSeq" id="WP_012637322.1">
    <property type="nucleotide sequence ID" value="NC_011901.1"/>
</dbReference>
<dbReference type="SMR" id="B8GMK2"/>
<dbReference type="STRING" id="396588.Tgr7_0742"/>
<dbReference type="KEGG" id="tgr:Tgr7_0742"/>
<dbReference type="eggNOG" id="COG0766">
    <property type="taxonomic scope" value="Bacteria"/>
</dbReference>
<dbReference type="HOGENOM" id="CLU_027387_0_0_6"/>
<dbReference type="OrthoDB" id="9803760at2"/>
<dbReference type="UniPathway" id="UPA00219"/>
<dbReference type="Proteomes" id="UP000002383">
    <property type="component" value="Chromosome"/>
</dbReference>
<dbReference type="GO" id="GO:0005737">
    <property type="term" value="C:cytoplasm"/>
    <property type="evidence" value="ECO:0007669"/>
    <property type="project" value="UniProtKB-SubCell"/>
</dbReference>
<dbReference type="GO" id="GO:0008760">
    <property type="term" value="F:UDP-N-acetylglucosamine 1-carboxyvinyltransferase activity"/>
    <property type="evidence" value="ECO:0007669"/>
    <property type="project" value="UniProtKB-UniRule"/>
</dbReference>
<dbReference type="GO" id="GO:0051301">
    <property type="term" value="P:cell division"/>
    <property type="evidence" value="ECO:0007669"/>
    <property type="project" value="UniProtKB-KW"/>
</dbReference>
<dbReference type="GO" id="GO:0071555">
    <property type="term" value="P:cell wall organization"/>
    <property type="evidence" value="ECO:0007669"/>
    <property type="project" value="UniProtKB-KW"/>
</dbReference>
<dbReference type="GO" id="GO:0009252">
    <property type="term" value="P:peptidoglycan biosynthetic process"/>
    <property type="evidence" value="ECO:0007669"/>
    <property type="project" value="UniProtKB-UniRule"/>
</dbReference>
<dbReference type="GO" id="GO:0008360">
    <property type="term" value="P:regulation of cell shape"/>
    <property type="evidence" value="ECO:0007669"/>
    <property type="project" value="UniProtKB-KW"/>
</dbReference>
<dbReference type="GO" id="GO:0019277">
    <property type="term" value="P:UDP-N-acetylgalactosamine biosynthetic process"/>
    <property type="evidence" value="ECO:0007669"/>
    <property type="project" value="InterPro"/>
</dbReference>
<dbReference type="CDD" id="cd01555">
    <property type="entry name" value="UdpNAET"/>
    <property type="match status" value="1"/>
</dbReference>
<dbReference type="FunFam" id="3.65.10.10:FF:000002">
    <property type="entry name" value="UDP-N-acetylglucosamine 1-carboxyvinyltransferase"/>
    <property type="match status" value="1"/>
</dbReference>
<dbReference type="Gene3D" id="3.65.10.10">
    <property type="entry name" value="Enolpyruvate transferase domain"/>
    <property type="match status" value="2"/>
</dbReference>
<dbReference type="HAMAP" id="MF_00111">
    <property type="entry name" value="MurA"/>
    <property type="match status" value="1"/>
</dbReference>
<dbReference type="InterPro" id="IPR001986">
    <property type="entry name" value="Enolpyruvate_Tfrase_dom"/>
</dbReference>
<dbReference type="InterPro" id="IPR036968">
    <property type="entry name" value="Enolpyruvate_Tfrase_sf"/>
</dbReference>
<dbReference type="InterPro" id="IPR050068">
    <property type="entry name" value="MurA_subfamily"/>
</dbReference>
<dbReference type="InterPro" id="IPR013792">
    <property type="entry name" value="RNA3'P_cycl/enolpyr_Trfase_a/b"/>
</dbReference>
<dbReference type="InterPro" id="IPR005750">
    <property type="entry name" value="UDP_GlcNAc_COvinyl_MurA"/>
</dbReference>
<dbReference type="NCBIfam" id="TIGR01072">
    <property type="entry name" value="murA"/>
    <property type="match status" value="1"/>
</dbReference>
<dbReference type="NCBIfam" id="NF006873">
    <property type="entry name" value="PRK09369.1"/>
    <property type="match status" value="1"/>
</dbReference>
<dbReference type="PANTHER" id="PTHR43783">
    <property type="entry name" value="UDP-N-ACETYLGLUCOSAMINE 1-CARBOXYVINYLTRANSFERASE"/>
    <property type="match status" value="1"/>
</dbReference>
<dbReference type="PANTHER" id="PTHR43783:SF1">
    <property type="entry name" value="UDP-N-ACETYLGLUCOSAMINE 1-CARBOXYVINYLTRANSFERASE"/>
    <property type="match status" value="1"/>
</dbReference>
<dbReference type="Pfam" id="PF00275">
    <property type="entry name" value="EPSP_synthase"/>
    <property type="match status" value="1"/>
</dbReference>
<dbReference type="SUPFAM" id="SSF55205">
    <property type="entry name" value="EPT/RTPC-like"/>
    <property type="match status" value="1"/>
</dbReference>
<organism>
    <name type="scientific">Thioalkalivibrio sulfidiphilus (strain HL-EbGR7)</name>
    <dbReference type="NCBI Taxonomy" id="396588"/>
    <lineage>
        <taxon>Bacteria</taxon>
        <taxon>Pseudomonadati</taxon>
        <taxon>Pseudomonadota</taxon>
        <taxon>Gammaproteobacteria</taxon>
        <taxon>Chromatiales</taxon>
        <taxon>Ectothiorhodospiraceae</taxon>
        <taxon>Thioalkalivibrio</taxon>
    </lineage>
</organism>
<gene>
    <name evidence="1" type="primary">murA</name>
    <name type="ordered locus">Tgr7_0742</name>
</gene>
<protein>
    <recommendedName>
        <fullName evidence="1">UDP-N-acetylglucosamine 1-carboxyvinyltransferase</fullName>
        <ecNumber evidence="1">2.5.1.7</ecNumber>
    </recommendedName>
    <alternativeName>
        <fullName evidence="1">Enoylpyruvate transferase</fullName>
    </alternativeName>
    <alternativeName>
        <fullName evidence="1">UDP-N-acetylglucosamine enolpyruvyl transferase</fullName>
        <shortName evidence="1">EPT</shortName>
    </alternativeName>
</protein>
<reference key="1">
    <citation type="journal article" date="2011" name="Stand. Genomic Sci.">
        <title>Complete genome sequence of 'Thioalkalivibrio sulfidophilus' HL-EbGr7.</title>
        <authorList>
            <person name="Muyzer G."/>
            <person name="Sorokin D.Y."/>
            <person name="Mavromatis K."/>
            <person name="Lapidus A."/>
            <person name="Clum A."/>
            <person name="Ivanova N."/>
            <person name="Pati A."/>
            <person name="d'Haeseleer P."/>
            <person name="Woyke T."/>
            <person name="Kyrpides N.C."/>
        </authorList>
    </citation>
    <scope>NUCLEOTIDE SEQUENCE [LARGE SCALE GENOMIC DNA]</scope>
    <source>
        <strain>HL-EbGR7</strain>
    </source>
</reference>
<comment type="function">
    <text evidence="1">Cell wall formation. Adds enolpyruvyl to UDP-N-acetylglucosamine.</text>
</comment>
<comment type="catalytic activity">
    <reaction evidence="1">
        <text>phosphoenolpyruvate + UDP-N-acetyl-alpha-D-glucosamine = UDP-N-acetyl-3-O-(1-carboxyvinyl)-alpha-D-glucosamine + phosphate</text>
        <dbReference type="Rhea" id="RHEA:18681"/>
        <dbReference type="ChEBI" id="CHEBI:43474"/>
        <dbReference type="ChEBI" id="CHEBI:57705"/>
        <dbReference type="ChEBI" id="CHEBI:58702"/>
        <dbReference type="ChEBI" id="CHEBI:68483"/>
        <dbReference type="EC" id="2.5.1.7"/>
    </reaction>
</comment>
<comment type="pathway">
    <text evidence="1">Cell wall biogenesis; peptidoglycan biosynthesis.</text>
</comment>
<comment type="subcellular location">
    <subcellularLocation>
        <location evidence="1">Cytoplasm</location>
    </subcellularLocation>
</comment>
<comment type="similarity">
    <text evidence="1">Belongs to the EPSP synthase family. MurA subfamily.</text>
</comment>
<sequence length="419" mass="44500">MDKLIIRGGRPLNGDVRISGAKNAVLPILASTLLADSPMTIGNVPHLQDVTTTMELLGRMGASLTVDERMHIEVDPTTTHDFVAPYELVKTMRASILVLGPMLARFGQAEVSMPGGCAIGSRPVNLHVDGLAAMGADISIDSGYIRARADRLKGARIVMDIVSVTGTENLMMAAALARGTTVIENAAREPEVVDLANCINTMGGQISGAGTDTIVIDGVETLHGCHYDVLPDRIETGTFLVAGAITGGKVRLRNTAPATLDAVLAKLEEAGAQMNIGEDWIELDMVGRRPRSVGLRTAPYPAFPTDMQAQFMALNSVAEGTAAIVETVFENRFMHALELQRMGADIRVEGNTALVRGVPKLTGAPVMATDLRASASLILAGLVAEGETLVDRIYHIDRGYECIEEKLSQLGASIRRVPG</sequence>
<keyword id="KW-0131">Cell cycle</keyword>
<keyword id="KW-0132">Cell division</keyword>
<keyword id="KW-0133">Cell shape</keyword>
<keyword id="KW-0961">Cell wall biogenesis/degradation</keyword>
<keyword id="KW-0963">Cytoplasm</keyword>
<keyword id="KW-0573">Peptidoglycan synthesis</keyword>
<keyword id="KW-0670">Pyruvate</keyword>
<keyword id="KW-1185">Reference proteome</keyword>
<keyword id="KW-0808">Transferase</keyword>